<reference key="1">
    <citation type="journal article" date="2000" name="EMBO J.">
        <title>A novel SMC protein complex in Schizosaccharomyces pombe contains the Rad18 DNA repair protein.</title>
        <authorList>
            <person name="Fousteri M.I."/>
            <person name="Lehmann A.R."/>
        </authorList>
    </citation>
    <scope>NUCLEOTIDE SEQUENCE [GENOMIC DNA]</scope>
</reference>
<reference key="2">
    <citation type="journal article" date="2002" name="Nature">
        <title>The genome sequence of Schizosaccharomyces pombe.</title>
        <authorList>
            <person name="Wood V."/>
            <person name="Gwilliam R."/>
            <person name="Rajandream M.A."/>
            <person name="Lyne M.H."/>
            <person name="Lyne R."/>
            <person name="Stewart A."/>
            <person name="Sgouros J.G."/>
            <person name="Peat N."/>
            <person name="Hayles J."/>
            <person name="Baker S.G."/>
            <person name="Basham D."/>
            <person name="Bowman S."/>
            <person name="Brooks K."/>
            <person name="Brown D."/>
            <person name="Brown S."/>
            <person name="Chillingworth T."/>
            <person name="Churcher C.M."/>
            <person name="Collins M."/>
            <person name="Connor R."/>
            <person name="Cronin A."/>
            <person name="Davis P."/>
            <person name="Feltwell T."/>
            <person name="Fraser A."/>
            <person name="Gentles S."/>
            <person name="Goble A."/>
            <person name="Hamlin N."/>
            <person name="Harris D.E."/>
            <person name="Hidalgo J."/>
            <person name="Hodgson G."/>
            <person name="Holroyd S."/>
            <person name="Hornsby T."/>
            <person name="Howarth S."/>
            <person name="Huckle E.J."/>
            <person name="Hunt S."/>
            <person name="Jagels K."/>
            <person name="James K.D."/>
            <person name="Jones L."/>
            <person name="Jones M."/>
            <person name="Leather S."/>
            <person name="McDonald S."/>
            <person name="McLean J."/>
            <person name="Mooney P."/>
            <person name="Moule S."/>
            <person name="Mungall K.L."/>
            <person name="Murphy L.D."/>
            <person name="Niblett D."/>
            <person name="Odell C."/>
            <person name="Oliver K."/>
            <person name="O'Neil S."/>
            <person name="Pearson D."/>
            <person name="Quail M.A."/>
            <person name="Rabbinowitsch E."/>
            <person name="Rutherford K.M."/>
            <person name="Rutter S."/>
            <person name="Saunders D."/>
            <person name="Seeger K."/>
            <person name="Sharp S."/>
            <person name="Skelton J."/>
            <person name="Simmonds M.N."/>
            <person name="Squares R."/>
            <person name="Squares S."/>
            <person name="Stevens K."/>
            <person name="Taylor K."/>
            <person name="Taylor R.G."/>
            <person name="Tivey A."/>
            <person name="Walsh S.V."/>
            <person name="Warren T."/>
            <person name="Whitehead S."/>
            <person name="Woodward J.R."/>
            <person name="Volckaert G."/>
            <person name="Aert R."/>
            <person name="Robben J."/>
            <person name="Grymonprez B."/>
            <person name="Weltjens I."/>
            <person name="Vanstreels E."/>
            <person name="Rieger M."/>
            <person name="Schaefer M."/>
            <person name="Mueller-Auer S."/>
            <person name="Gabel C."/>
            <person name="Fuchs M."/>
            <person name="Duesterhoeft A."/>
            <person name="Fritzc C."/>
            <person name="Holzer E."/>
            <person name="Moestl D."/>
            <person name="Hilbert H."/>
            <person name="Borzym K."/>
            <person name="Langer I."/>
            <person name="Beck A."/>
            <person name="Lehrach H."/>
            <person name="Reinhardt R."/>
            <person name="Pohl T.M."/>
            <person name="Eger P."/>
            <person name="Zimmermann W."/>
            <person name="Wedler H."/>
            <person name="Wambutt R."/>
            <person name="Purnelle B."/>
            <person name="Goffeau A."/>
            <person name="Cadieu E."/>
            <person name="Dreano S."/>
            <person name="Gloux S."/>
            <person name="Lelaure V."/>
            <person name="Mottier S."/>
            <person name="Galibert F."/>
            <person name="Aves S.J."/>
            <person name="Xiang Z."/>
            <person name="Hunt C."/>
            <person name="Moore K."/>
            <person name="Hurst S.M."/>
            <person name="Lucas M."/>
            <person name="Rochet M."/>
            <person name="Gaillardin C."/>
            <person name="Tallada V.A."/>
            <person name="Garzon A."/>
            <person name="Thode G."/>
            <person name="Daga R.R."/>
            <person name="Cruzado L."/>
            <person name="Jimenez J."/>
            <person name="Sanchez M."/>
            <person name="del Rey F."/>
            <person name="Benito J."/>
            <person name="Dominguez A."/>
            <person name="Revuelta J.L."/>
            <person name="Moreno S."/>
            <person name="Armstrong J."/>
            <person name="Forsburg S.L."/>
            <person name="Cerutti L."/>
            <person name="Lowe T."/>
            <person name="McCombie W.R."/>
            <person name="Paulsen I."/>
            <person name="Potashkin J."/>
            <person name="Shpakovski G.V."/>
            <person name="Ussery D."/>
            <person name="Barrell B.G."/>
            <person name="Nurse P."/>
        </authorList>
    </citation>
    <scope>NUCLEOTIDE SEQUENCE [LARGE SCALE GENOMIC DNA]</scope>
    <source>
        <strain>972 / ATCC 24843</strain>
    </source>
</reference>
<reference key="3">
    <citation type="journal article" date="2011" name="Science">
        <title>Comparative functional genomics of the fission yeasts.</title>
        <authorList>
            <person name="Rhind N."/>
            <person name="Chen Z."/>
            <person name="Yassour M."/>
            <person name="Thompson D.A."/>
            <person name="Haas B.J."/>
            <person name="Habib N."/>
            <person name="Wapinski I."/>
            <person name="Roy S."/>
            <person name="Lin M.F."/>
            <person name="Heiman D.I."/>
            <person name="Young S.K."/>
            <person name="Furuya K."/>
            <person name="Guo Y."/>
            <person name="Pidoux A."/>
            <person name="Chen H.M."/>
            <person name="Robbertse B."/>
            <person name="Goldberg J.M."/>
            <person name="Aoki K."/>
            <person name="Bayne E.H."/>
            <person name="Berlin A.M."/>
            <person name="Desjardins C.A."/>
            <person name="Dobbs E."/>
            <person name="Dukaj L."/>
            <person name="Fan L."/>
            <person name="FitzGerald M.G."/>
            <person name="French C."/>
            <person name="Gujja S."/>
            <person name="Hansen K."/>
            <person name="Keifenheim D."/>
            <person name="Levin J.Z."/>
            <person name="Mosher R.A."/>
            <person name="Mueller C.A."/>
            <person name="Pfiffner J."/>
            <person name="Priest M."/>
            <person name="Russ C."/>
            <person name="Smialowska A."/>
            <person name="Swoboda P."/>
            <person name="Sykes S.M."/>
            <person name="Vaughn M."/>
            <person name="Vengrova S."/>
            <person name="Yoder R."/>
            <person name="Zeng Q."/>
            <person name="Allshire R."/>
            <person name="Baulcombe D."/>
            <person name="Birren B.W."/>
            <person name="Brown W."/>
            <person name="Ekwall K."/>
            <person name="Kellis M."/>
            <person name="Leatherwood J."/>
            <person name="Levin H."/>
            <person name="Margalit H."/>
            <person name="Martienssen R."/>
            <person name="Nieduszynski C.A."/>
            <person name="Spatafora J.W."/>
            <person name="Friedman N."/>
            <person name="Dalgaard J.Z."/>
            <person name="Baumann P."/>
            <person name="Niki H."/>
            <person name="Regev A."/>
            <person name="Nusbaum C."/>
        </authorList>
    </citation>
    <scope>REVISION OF GENE MODEL</scope>
</reference>
<reference key="4">
    <citation type="journal article" date="2003" name="Mol. Cell. Biol.">
        <title>Replication checkpoint kinase Cds1 regulates recombinational repair protein Rad60.</title>
        <authorList>
            <person name="Boddy M.N."/>
            <person name="Shanahan P."/>
            <person name="McDonald W.H."/>
            <person name="Lopez-Girona A."/>
            <person name="Noguchi E."/>
            <person name="Yates J.R. III"/>
            <person name="Russell P."/>
        </authorList>
    </citation>
    <scope>PROTEIN SEQUENCE OF 241-254; 738-747; 952-971 AND 982-994</scope>
    <scope>INTERACTION WITH RAD60</scope>
</reference>
<reference key="5">
    <citation type="journal article" date="2003" name="J. Biol. Chem.">
        <title>Novel essential DNA repair proteins Nse1 and Nse2 are subunits of the fission yeast Smc5-Smc6 complex.</title>
        <authorList>
            <person name="McDonald W.H."/>
            <person name="Pavlova Y."/>
            <person name="Yates J.R. III"/>
            <person name="Boddy M.N."/>
        </authorList>
    </citation>
    <scope>INTERACTION WITH NSE1 AND NSE2</scope>
</reference>
<reference key="6">
    <citation type="journal article" date="2004" name="Mol. Biol. Cell">
        <title>Nse1, Nse2, and a novel subunit of the Smc5-Smc6 complex, Nse3, play a crucial role in meiosis.</title>
        <authorList>
            <person name="Pebernard S."/>
            <person name="McDonald W.H."/>
            <person name="Pavlova Y."/>
            <person name="Yates J.R. III"/>
            <person name="Boddy M.N."/>
        </authorList>
    </citation>
    <scope>IDENTIFICATION IN THE SMC5-SMC6 COMPLEX</scope>
    <scope>IDENTIFICATION BY MASS SPECTROMETRY</scope>
</reference>
<reference key="7">
    <citation type="journal article" date="2004" name="Mol. Cell. Biol.">
        <title>Rad62 protein functionally and physically associates with the smc5/smc6 protein complex and is required for chromosome integrity and recombination repair in fission yeast.</title>
        <authorList>
            <person name="Morikawa H."/>
            <person name="Morishita T."/>
            <person name="Kawane S."/>
            <person name="Iwasaki H."/>
            <person name="Carr A.M."/>
            <person name="Shinagawa H."/>
        </authorList>
    </citation>
    <scope>INTERACTION WITH NSE4</scope>
</reference>
<reference key="8">
    <citation type="journal article" date="2005" name="Mol. Cell. Biol.">
        <title>Nse2, a component of the Smc5-6 complex, is a SUMO ligase required for the response to DNA damage.</title>
        <authorList>
            <person name="Andrews E.A."/>
            <person name="Palecek J."/>
            <person name="Sergeant J."/>
            <person name="Taylor E."/>
            <person name="Lehmann A.R."/>
            <person name="Watts F.Z."/>
        </authorList>
    </citation>
    <scope>INTERACTION WITH NSE2</scope>
</reference>
<reference key="9">
    <citation type="journal article" date="2005" name="Mol. Cell. Biol.">
        <title>Composition and architecture of the Schizosaccharomyces pombe Rad18 (Smc5-6) complex.</title>
        <authorList>
            <person name="Sergeant J."/>
            <person name="Taylor E."/>
            <person name="Palecek J."/>
            <person name="Fousteri M."/>
            <person name="Andrews E.A."/>
            <person name="Sweeney S."/>
            <person name="Shinagawa H."/>
            <person name="Watts F.Z."/>
            <person name="Lehmann A.R."/>
        </authorList>
    </citation>
    <scope>INTERACTION WITH NSE2</scope>
</reference>
<reference key="10">
    <citation type="journal article" date="2006" name="Mol. Cell. Biol.">
        <title>The Nse5-Nse6 dimer mediates DNA repair roles of the Smc5-Smc6 complex.</title>
        <authorList>
            <person name="Pebernard S."/>
            <person name="Wohlschlegel J."/>
            <person name="McDonald W.H."/>
            <person name="Yates J.R. III"/>
            <person name="Boddy M.N."/>
        </authorList>
    </citation>
    <scope>IDENTIFICATION IN THE SMC5-SMC6 COMPLEX</scope>
    <scope>IDENTIFICATION BY MASS SPECTROMETRY</scope>
</reference>
<reference key="11">
    <citation type="journal article" date="2006" name="Nat. Biotechnol.">
        <title>ORFeome cloning and global analysis of protein localization in the fission yeast Schizosaccharomyces pombe.</title>
        <authorList>
            <person name="Matsuyama A."/>
            <person name="Arai R."/>
            <person name="Yashiroda Y."/>
            <person name="Shirai A."/>
            <person name="Kamata A."/>
            <person name="Sekido S."/>
            <person name="Kobayashi Y."/>
            <person name="Hashimoto A."/>
            <person name="Hamamoto M."/>
            <person name="Hiraoka Y."/>
            <person name="Horinouchi S."/>
            <person name="Yoshida M."/>
        </authorList>
    </citation>
    <scope>SUBCELLULAR LOCATION [LARGE SCALE ANALYSIS]</scope>
</reference>
<gene>
    <name type="primary">smc5</name>
    <name type="synonym">spr18</name>
    <name type="ORF">SPAC14C4.02c</name>
</gene>
<name>SMC5_SCHPO</name>
<evidence type="ECO:0000250" key="1"/>
<evidence type="ECO:0000255" key="2"/>
<evidence type="ECO:0000269" key="3">
    <source>
    </source>
</evidence>
<evidence type="ECO:0000269" key="4">
    <source>
    </source>
</evidence>
<evidence type="ECO:0000269" key="5">
    <source>
    </source>
</evidence>
<evidence type="ECO:0000269" key="6">
    <source>
    </source>
</evidence>
<evidence type="ECO:0000269" key="7">
    <source>
    </source>
</evidence>
<evidence type="ECO:0000269" key="8">
    <source>
    </source>
</evidence>
<evidence type="ECO:0000269" key="9">
    <source>
    </source>
</evidence>
<evidence type="ECO:0000269" key="10">
    <source>
    </source>
</evidence>
<evidence type="ECO:0000305" key="11"/>
<evidence type="ECO:0007829" key="12">
    <source>
        <dbReference type="PDB" id="5MG8"/>
    </source>
</evidence>
<protein>
    <recommendedName>
        <fullName>Structural maintenance of chromosomes protein 5</fullName>
    </recommendedName>
    <alternativeName>
        <fullName>DNA repair protein spr18</fullName>
    </alternativeName>
    <alternativeName>
        <fullName>SMC partner of rad18</fullName>
    </alternativeName>
</protein>
<comment type="function">
    <text>Acts in a DNA repair pathway for removal of UV-induced DNA damage that is distinct from classical nucleotide excision repair and in repair of ionizing radiation damage. Functions in homologous recombination repair of DNA double strand breaks and in recovery of stalled replication forks. Plays a critical role in meiosis.</text>
</comment>
<comment type="subunit">
    <text evidence="3 4 5 6 7 8 9">Two subcomplexes smc5-smc6-nse2 and nse1-nse3-nse4 exist. These subcomplexes are then brought together via a number of interactions, forming the Smc5-Smc6 complex. Also interacts with rad60.</text>
</comment>
<comment type="interaction">
    <interactant intactId="EBI-603756">
        <id>O13710</id>
    </interactant>
    <interactant intactId="EBI-605440">
        <id>Q53EK2</id>
        <label>nse1</label>
    </interactant>
    <organismsDiffer>false</organismsDiffer>
    <experiments>6</experiments>
</comment>
<comment type="interaction">
    <interactant intactId="EBI-603756">
        <id>O13710</id>
    </interactant>
    <interactant intactId="EBI-605449">
        <id>Q4PIR3</id>
        <label>nse2</label>
    </interactant>
    <organismsDiffer>false</organismsDiffer>
    <experiments>9</experiments>
</comment>
<comment type="interaction">
    <interactant intactId="EBI-603756">
        <id>O13710</id>
    </interactant>
    <interactant intactId="EBI-605466">
        <id>Q9Y7U4</id>
        <label>nse3</label>
    </interactant>
    <organismsDiffer>false</organismsDiffer>
    <experiments>5</experiments>
</comment>
<comment type="interaction">
    <interactant intactId="EBI-603756">
        <id>O13710</id>
    </interactant>
    <interactant intactId="EBI-605484">
        <id>Q6BDR8</id>
        <label>nse4</label>
    </interactant>
    <organismsDiffer>false</organismsDiffer>
    <experiments>5</experiments>
</comment>
<comment type="interaction">
    <interactant intactId="EBI-603756">
        <id>O13710</id>
    </interactant>
    <interactant intactId="EBI-1150352">
        <id>O94668</id>
        <label>nse5</label>
    </interactant>
    <organismsDiffer>false</organismsDiffer>
    <experiments>4</experiments>
</comment>
<comment type="interaction">
    <interactant intactId="EBI-603756">
        <id>O13710</id>
    </interactant>
    <interactant intactId="EBI-1150368">
        <id>O13688</id>
        <label>nse6</label>
    </interactant>
    <organismsDiffer>false</organismsDiffer>
    <experiments>5</experiments>
</comment>
<comment type="interaction">
    <interactant intactId="EBI-603756">
        <id>O13710</id>
    </interactant>
    <interactant intactId="EBI-3650521">
        <id>Q9USX3</id>
        <label>rad60</label>
    </interactant>
    <organismsDiffer>false</organismsDiffer>
    <experiments>2</experiments>
</comment>
<comment type="interaction">
    <interactant intactId="EBI-603756">
        <id>O13710</id>
    </interactant>
    <interactant intactId="EBI-603745">
        <id>P53692</id>
        <label>smc6</label>
    </interactant>
    <organismsDiffer>false</organismsDiffer>
    <experiments>10</experiments>
</comment>
<comment type="subcellular location">
    <subcellularLocation>
        <location evidence="10">Nucleus</location>
    </subcellularLocation>
    <subcellularLocation>
        <location evidence="10">Cytoplasm</location>
        <location evidence="10">Cytoskeleton</location>
        <location evidence="10">Microtubule organizing center</location>
        <location evidence="10">Spindle pole body</location>
    </subcellularLocation>
    <subcellularLocation>
        <location evidence="10">Barrier septum</location>
    </subcellularLocation>
    <subcellularLocation>
        <location evidence="10">Chromosome</location>
    </subcellularLocation>
</comment>
<comment type="domain">
    <text evidence="1">The flexible hinge domain, which separates the large intramolecular coiled coil regions, allows the heterotypic interaction with the corresponding domain of smc6, forming a V-shaped heterodimer.</text>
</comment>
<comment type="similarity">
    <text evidence="11">Belongs to the SMC family. SMC5 subfamily.</text>
</comment>
<sequence>MDGLRPSKRRKSNPLYSDYALGSIVRIKLVNFVTYDYCELFPGPYLNLIIGPNGTGKSTIVSAICIGLGWPPKLLGRAKEAREFIKYGKNTATIEIEMKYRDDETVTITRQISQDKSSSFSINREACATSSITSLMDTFNVQLNNLCHFLPQDRVAEFAQLDPYSRLMETERAIDHEGLLPAHEKLIDLRKREREILQNKNQGQSTLNSLKDRQQALEKEVNIFKEREKIKSYIEMLGLAKMLVIYREKTNVFNQLRADKKKLKKDLKDLVEEFQPILDKGEELRSDLKLKDDTFNDYSSASMELNTSNLRARASFSNFMENEKKLYEKVNTNRTLLRNANLTLNEAQQSVKSLTERQGPRPSDNGVQDLQEKMQEVNAEKLQHENEKLESSHELGSIRTLKAQKLIDLDNIKRELSYYNDATKRKLDFMSSAPGWEDAYQTYQLLKEYESAFEAPAYGPIYMNLKCKEKGFAALIEGFFRTDTFRTFIMSNYNDYLKLMDLITSKTKYTPTIREFSSERKKKIEDFEPPCSREKLQSFGFDGYVIDFLEGPEVVLVALCHMLKIHQIPIAKRELPPASVNALNNFRLANGDPVLKTYLAGSSIHLVFRSAYGDREITRRTDPLPSRSIYFSENVEMDLVKRKEEQLNAQLSQLENLQNEERKLQEKVNEHESLLSRTNDILSTLRKERDEKLIPIHEWQQLQERIEHQTLLLRQREKVPEQFAAEIEKNEDIRKENFEALMNSVLKVKENSIKATNNFEKMLGSRLNVIEAKYKLEKHEMDANQVNARLTEVQDRLKDITDKLASAREDAMSLYGSVVDSLQTQSSDRQTAITELNEEFATSSEVDNKISIEETKLKFMNVNSYVMEQYDARKKEIEELESKMSDFDQSVEELQDEMNSIKEDWVSKLEENVQCISDRFSKGMSGMGYAGEVRLGKSDDYDKWYIDILVQFREEEGLQKLTGQRQSGGERSVSTIMYLLSLQGLAIAPFRIVDEINQGMDPRNERVVHRHIVNSVCDNAVSQYFLVTPKLLPDLTYHRNLKVLCICNGAWLPATFRTSLSTYFEKLKKSALISSS</sequence>
<feature type="chain" id="PRO_0000119019" description="Structural maintenance of chromosomes protein 5">
    <location>
        <begin position="1"/>
        <end position="1076"/>
    </location>
</feature>
<feature type="region of interest" description="Flexible hinge">
    <location>
        <begin position="399"/>
        <end position="629"/>
    </location>
</feature>
<feature type="coiled-coil region" evidence="2">
    <location>
        <begin position="184"/>
        <end position="275"/>
    </location>
</feature>
<feature type="coiled-coil region" evidence="2">
    <location>
        <begin position="328"/>
        <end position="398"/>
    </location>
</feature>
<feature type="coiled-coil region" evidence="2">
    <location>
        <begin position="630"/>
        <end position="693"/>
    </location>
</feature>
<feature type="coiled-coil region" evidence="2">
    <location>
        <begin position="767"/>
        <end position="816"/>
    </location>
</feature>
<feature type="coiled-coil region" evidence="2">
    <location>
        <begin position="866"/>
        <end position="907"/>
    </location>
</feature>
<feature type="binding site" evidence="2">
    <location>
        <begin position="51"/>
        <end position="58"/>
    </location>
    <ligand>
        <name>ATP</name>
        <dbReference type="ChEBI" id="CHEBI:30616"/>
    </ligand>
</feature>
<feature type="helix" evidence="12">
    <location>
        <begin position="411"/>
        <end position="432"/>
    </location>
</feature>
<feature type="helix" evidence="12">
    <location>
        <begin position="437"/>
        <end position="448"/>
    </location>
</feature>
<feature type="helix" evidence="12">
    <location>
        <begin position="450"/>
        <end position="452"/>
    </location>
</feature>
<feature type="helix" evidence="12">
    <location>
        <begin position="461"/>
        <end position="464"/>
    </location>
</feature>
<feature type="strand" evidence="12">
    <location>
        <begin position="466"/>
        <end position="469"/>
    </location>
</feature>
<feature type="helix" evidence="12">
    <location>
        <begin position="470"/>
        <end position="472"/>
    </location>
</feature>
<feature type="helix" evidence="12">
    <location>
        <begin position="473"/>
        <end position="485"/>
    </location>
</feature>
<feature type="strand" evidence="12">
    <location>
        <begin position="487"/>
        <end position="492"/>
    </location>
</feature>
<feature type="helix" evidence="12">
    <location>
        <begin position="493"/>
        <end position="506"/>
    </location>
</feature>
<feature type="strand" evidence="12">
    <location>
        <begin position="512"/>
        <end position="515"/>
    </location>
</feature>
<feature type="helix" evidence="12">
    <location>
        <begin position="524"/>
        <end position="526"/>
    </location>
</feature>
<feature type="helix" evidence="12">
    <location>
        <begin position="533"/>
        <end position="538"/>
    </location>
</feature>
<feature type="helix" evidence="12">
    <location>
        <begin position="545"/>
        <end position="548"/>
    </location>
</feature>
<feature type="helix" evidence="12">
    <location>
        <begin position="553"/>
        <end position="562"/>
    </location>
</feature>
<feature type="helix" evidence="12">
    <location>
        <begin position="565"/>
        <end position="567"/>
    </location>
</feature>
<feature type="strand" evidence="12">
    <location>
        <begin position="569"/>
        <end position="573"/>
    </location>
</feature>
<feature type="helix" evidence="12">
    <location>
        <begin position="577"/>
        <end position="584"/>
    </location>
</feature>
<feature type="strand" evidence="12">
    <location>
        <begin position="593"/>
        <end position="595"/>
    </location>
</feature>
<feature type="strand" evidence="12">
    <location>
        <begin position="597"/>
        <end position="600"/>
    </location>
</feature>
<feature type="strand" evidence="12">
    <location>
        <begin position="603"/>
        <end position="609"/>
    </location>
</feature>
<feature type="strand" evidence="12">
    <location>
        <begin position="617"/>
        <end position="623"/>
    </location>
</feature>
<feature type="helix" evidence="12">
    <location>
        <begin position="637"/>
        <end position="688"/>
    </location>
</feature>
<proteinExistence type="evidence at protein level"/>
<organism>
    <name type="scientific">Schizosaccharomyces pombe (strain 972 / ATCC 24843)</name>
    <name type="common">Fission yeast</name>
    <dbReference type="NCBI Taxonomy" id="284812"/>
    <lineage>
        <taxon>Eukaryota</taxon>
        <taxon>Fungi</taxon>
        <taxon>Dikarya</taxon>
        <taxon>Ascomycota</taxon>
        <taxon>Taphrinomycotina</taxon>
        <taxon>Schizosaccharomycetes</taxon>
        <taxon>Schizosaccharomycetales</taxon>
        <taxon>Schizosaccharomycetaceae</taxon>
        <taxon>Schizosaccharomyces</taxon>
    </lineage>
</organism>
<accession>O13710</accession>
<dbReference type="EMBL" id="AJ277543">
    <property type="protein sequence ID" value="CAB89122.1"/>
    <property type="molecule type" value="Genomic_DNA"/>
</dbReference>
<dbReference type="EMBL" id="CU329670">
    <property type="protein sequence ID" value="CAB11195.2"/>
    <property type="molecule type" value="Genomic_DNA"/>
</dbReference>
<dbReference type="PIR" id="T37687">
    <property type="entry name" value="T37687"/>
</dbReference>
<dbReference type="RefSeq" id="NP_594907.2">
    <property type="nucleotide sequence ID" value="NM_001020338.2"/>
</dbReference>
<dbReference type="PDB" id="5MG8">
    <property type="method" value="X-ray"/>
    <property type="resolution" value="2.75 A"/>
    <property type="chains" value="A/C=366-692"/>
</dbReference>
<dbReference type="PDBsum" id="5MG8"/>
<dbReference type="SMR" id="O13710"/>
<dbReference type="BioGRID" id="278084">
    <property type="interactions" value="9"/>
</dbReference>
<dbReference type="ComplexPortal" id="CPX-25736">
    <property type="entry name" value="SMC5-SMC6 SUMO ligase complex"/>
</dbReference>
<dbReference type="FunCoup" id="O13710">
    <property type="interactions" value="945"/>
</dbReference>
<dbReference type="IntAct" id="O13710">
    <property type="interactions" value="8"/>
</dbReference>
<dbReference type="STRING" id="284812.O13710"/>
<dbReference type="iPTMnet" id="O13710"/>
<dbReference type="PaxDb" id="4896-SPAC14C4.02c.1"/>
<dbReference type="EnsemblFungi" id="SPAC14C4.02c.1">
    <property type="protein sequence ID" value="SPAC14C4.02c.1:pep"/>
    <property type="gene ID" value="SPAC14C4.02c"/>
</dbReference>
<dbReference type="GeneID" id="2541587"/>
<dbReference type="KEGG" id="spo:2541587"/>
<dbReference type="PomBase" id="SPAC14C4.02c">
    <property type="gene designation" value="smc5"/>
</dbReference>
<dbReference type="VEuPathDB" id="FungiDB:SPAC14C4.02c"/>
<dbReference type="eggNOG" id="KOG0979">
    <property type="taxonomic scope" value="Eukaryota"/>
</dbReference>
<dbReference type="HOGENOM" id="CLU_004969_2_0_1"/>
<dbReference type="InParanoid" id="O13710"/>
<dbReference type="OMA" id="RFWTSQP"/>
<dbReference type="Reactome" id="R-SPO-3108214">
    <property type="pathway name" value="SUMOylation of DNA damage response and repair proteins"/>
</dbReference>
<dbReference type="PRO" id="PR:O13710"/>
<dbReference type="Proteomes" id="UP000002485">
    <property type="component" value="Chromosome I"/>
</dbReference>
<dbReference type="GO" id="GO:0005737">
    <property type="term" value="C:cytoplasm"/>
    <property type="evidence" value="ECO:0007669"/>
    <property type="project" value="UniProtKB-KW"/>
</dbReference>
<dbReference type="GO" id="GO:0000935">
    <property type="term" value="C:division septum"/>
    <property type="evidence" value="ECO:0007669"/>
    <property type="project" value="UniProtKB-SubCell"/>
</dbReference>
<dbReference type="GO" id="GO:0005634">
    <property type="term" value="C:nucleus"/>
    <property type="evidence" value="ECO:0007005"/>
    <property type="project" value="PomBase"/>
</dbReference>
<dbReference type="GO" id="GO:0030915">
    <property type="term" value="C:Smc5-Smc6 complex"/>
    <property type="evidence" value="ECO:0000314"/>
    <property type="project" value="PomBase"/>
</dbReference>
<dbReference type="GO" id="GO:0005816">
    <property type="term" value="C:spindle pole body"/>
    <property type="evidence" value="ECO:0007669"/>
    <property type="project" value="UniProtKB-SubCell"/>
</dbReference>
<dbReference type="GO" id="GO:0005524">
    <property type="term" value="F:ATP binding"/>
    <property type="evidence" value="ECO:0000255"/>
    <property type="project" value="PomBase"/>
</dbReference>
<dbReference type="GO" id="GO:0016887">
    <property type="term" value="F:ATP hydrolysis activity"/>
    <property type="evidence" value="ECO:0007669"/>
    <property type="project" value="InterPro"/>
</dbReference>
<dbReference type="GO" id="GO:0003697">
    <property type="term" value="F:single-stranded DNA binding"/>
    <property type="evidence" value="ECO:0000314"/>
    <property type="project" value="PomBase"/>
</dbReference>
<dbReference type="GO" id="GO:0000724">
    <property type="term" value="P:double-strand break repair via homologous recombination"/>
    <property type="evidence" value="ECO:0000318"/>
    <property type="project" value="GO_Central"/>
</dbReference>
<dbReference type="GO" id="GO:0051321">
    <property type="term" value="P:meiotic cell cycle"/>
    <property type="evidence" value="ECO:0007669"/>
    <property type="project" value="UniProtKB-KW"/>
</dbReference>
<dbReference type="FunFam" id="3.40.50.300:FF:001301">
    <property type="entry name" value="Structural maintenance of chromosomes 5"/>
    <property type="match status" value="1"/>
</dbReference>
<dbReference type="FunFam" id="3.40.50.300:FF:000793">
    <property type="entry name" value="Structural maintenance of chromosomes protein 5"/>
    <property type="match status" value="1"/>
</dbReference>
<dbReference type="Gene3D" id="3.40.50.300">
    <property type="entry name" value="P-loop containing nucleotide triphosphate hydrolases"/>
    <property type="match status" value="2"/>
</dbReference>
<dbReference type="InterPro" id="IPR027417">
    <property type="entry name" value="P-loop_NTPase"/>
</dbReference>
<dbReference type="InterPro" id="IPR038729">
    <property type="entry name" value="Rad50/SbcC_AAA"/>
</dbReference>
<dbReference type="PANTHER" id="PTHR45916">
    <property type="entry name" value="STRUCTURAL MAINTENANCE OF CHROMOSOMES PROTEIN 5"/>
    <property type="match status" value="1"/>
</dbReference>
<dbReference type="PANTHER" id="PTHR45916:SF1">
    <property type="entry name" value="STRUCTURAL MAINTENANCE OF CHROMOSOMES PROTEIN 5"/>
    <property type="match status" value="1"/>
</dbReference>
<dbReference type="Pfam" id="PF13476">
    <property type="entry name" value="AAA_23"/>
    <property type="match status" value="1"/>
</dbReference>
<dbReference type="SUPFAM" id="SSF52540">
    <property type="entry name" value="P-loop containing nucleoside triphosphate hydrolases"/>
    <property type="match status" value="2"/>
</dbReference>
<keyword id="KW-0002">3D-structure</keyword>
<keyword id="KW-0067">ATP-binding</keyword>
<keyword id="KW-0158">Chromosome</keyword>
<keyword id="KW-0175">Coiled coil</keyword>
<keyword id="KW-0963">Cytoplasm</keyword>
<keyword id="KW-0206">Cytoskeleton</keyword>
<keyword id="KW-0903">Direct protein sequencing</keyword>
<keyword id="KW-0227">DNA damage</keyword>
<keyword id="KW-0233">DNA recombination</keyword>
<keyword id="KW-0234">DNA repair</keyword>
<keyword id="KW-0469">Meiosis</keyword>
<keyword id="KW-0547">Nucleotide-binding</keyword>
<keyword id="KW-0539">Nucleus</keyword>
<keyword id="KW-1185">Reference proteome</keyword>